<feature type="chain" id="PRO_1000144423" description="Large ribosomal subunit protein bL17">
    <location>
        <begin position="1"/>
        <end position="127"/>
    </location>
</feature>
<evidence type="ECO:0000255" key="1">
    <source>
        <dbReference type="HAMAP-Rule" id="MF_01368"/>
    </source>
</evidence>
<evidence type="ECO:0000305" key="2"/>
<keyword id="KW-0687">Ribonucleoprotein</keyword>
<keyword id="KW-0689">Ribosomal protein</keyword>
<protein>
    <recommendedName>
        <fullName evidence="1">Large ribosomal subunit protein bL17</fullName>
    </recommendedName>
    <alternativeName>
        <fullName evidence="2">50S ribosomal protein L17</fullName>
    </alternativeName>
</protein>
<reference key="1">
    <citation type="journal article" date="2008" name="J. Bacteriol.">
        <title>Insights into the environmental resistance gene pool from the genome sequence of the multidrug-resistant environmental isolate Escherichia coli SMS-3-5.</title>
        <authorList>
            <person name="Fricke W.F."/>
            <person name="Wright M.S."/>
            <person name="Lindell A.H."/>
            <person name="Harkins D.M."/>
            <person name="Baker-Austin C."/>
            <person name="Ravel J."/>
            <person name="Stepanauskas R."/>
        </authorList>
    </citation>
    <scope>NUCLEOTIDE SEQUENCE [LARGE SCALE GENOMIC DNA]</scope>
    <source>
        <strain>SMS-3-5 / SECEC</strain>
    </source>
</reference>
<accession>B1LGQ0</accession>
<organism>
    <name type="scientific">Escherichia coli (strain SMS-3-5 / SECEC)</name>
    <dbReference type="NCBI Taxonomy" id="439855"/>
    <lineage>
        <taxon>Bacteria</taxon>
        <taxon>Pseudomonadati</taxon>
        <taxon>Pseudomonadota</taxon>
        <taxon>Gammaproteobacteria</taxon>
        <taxon>Enterobacterales</taxon>
        <taxon>Enterobacteriaceae</taxon>
        <taxon>Escherichia</taxon>
    </lineage>
</organism>
<proteinExistence type="inferred from homology"/>
<name>RL17_ECOSM</name>
<sequence>MRHRKSGRQLNRNSSHRQAMFRNMAGSLVRHEIIKTTLPKAKELRRVVEPLITLAKTDSVANRRLAFARTRDNEIVAKLFNELGPRFASRAGGYTRILKCGFRAGDNAPMAYIELVDRSEKAEAAAE</sequence>
<comment type="subunit">
    <text evidence="1">Part of the 50S ribosomal subunit. Contacts protein L32.</text>
</comment>
<comment type="similarity">
    <text evidence="1">Belongs to the bacterial ribosomal protein bL17 family.</text>
</comment>
<gene>
    <name evidence="1" type="primary">rplQ</name>
    <name type="ordered locus">EcSMS35_3589</name>
</gene>
<dbReference type="EMBL" id="CP000970">
    <property type="protein sequence ID" value="ACB18861.1"/>
    <property type="molecule type" value="Genomic_DNA"/>
</dbReference>
<dbReference type="RefSeq" id="WP_001216368.1">
    <property type="nucleotide sequence ID" value="NC_010498.1"/>
</dbReference>
<dbReference type="SMR" id="B1LGQ0"/>
<dbReference type="GeneID" id="97442834"/>
<dbReference type="KEGG" id="ecm:EcSMS35_3589"/>
<dbReference type="HOGENOM" id="CLU_074407_2_0_6"/>
<dbReference type="Proteomes" id="UP000007011">
    <property type="component" value="Chromosome"/>
</dbReference>
<dbReference type="GO" id="GO:0022625">
    <property type="term" value="C:cytosolic large ribosomal subunit"/>
    <property type="evidence" value="ECO:0007669"/>
    <property type="project" value="TreeGrafter"/>
</dbReference>
<dbReference type="GO" id="GO:0003735">
    <property type="term" value="F:structural constituent of ribosome"/>
    <property type="evidence" value="ECO:0007669"/>
    <property type="project" value="InterPro"/>
</dbReference>
<dbReference type="GO" id="GO:0006412">
    <property type="term" value="P:translation"/>
    <property type="evidence" value="ECO:0007669"/>
    <property type="project" value="UniProtKB-UniRule"/>
</dbReference>
<dbReference type="FunFam" id="3.90.1030.10:FF:000001">
    <property type="entry name" value="50S ribosomal protein L17"/>
    <property type="match status" value="1"/>
</dbReference>
<dbReference type="Gene3D" id="3.90.1030.10">
    <property type="entry name" value="Ribosomal protein L17"/>
    <property type="match status" value="1"/>
</dbReference>
<dbReference type="HAMAP" id="MF_01368">
    <property type="entry name" value="Ribosomal_bL17"/>
    <property type="match status" value="1"/>
</dbReference>
<dbReference type="InterPro" id="IPR000456">
    <property type="entry name" value="Ribosomal_bL17"/>
</dbReference>
<dbReference type="InterPro" id="IPR047859">
    <property type="entry name" value="Ribosomal_bL17_CS"/>
</dbReference>
<dbReference type="InterPro" id="IPR036373">
    <property type="entry name" value="Ribosomal_bL17_sf"/>
</dbReference>
<dbReference type="NCBIfam" id="TIGR00059">
    <property type="entry name" value="L17"/>
    <property type="match status" value="1"/>
</dbReference>
<dbReference type="PANTHER" id="PTHR14413:SF16">
    <property type="entry name" value="LARGE RIBOSOMAL SUBUNIT PROTEIN BL17M"/>
    <property type="match status" value="1"/>
</dbReference>
<dbReference type="PANTHER" id="PTHR14413">
    <property type="entry name" value="RIBOSOMAL PROTEIN L17"/>
    <property type="match status" value="1"/>
</dbReference>
<dbReference type="Pfam" id="PF01196">
    <property type="entry name" value="Ribosomal_L17"/>
    <property type="match status" value="1"/>
</dbReference>
<dbReference type="SUPFAM" id="SSF64263">
    <property type="entry name" value="Prokaryotic ribosomal protein L17"/>
    <property type="match status" value="1"/>
</dbReference>
<dbReference type="PROSITE" id="PS01167">
    <property type="entry name" value="RIBOSOMAL_L17"/>
    <property type="match status" value="1"/>
</dbReference>